<keyword id="KW-0378">Hydrolase</keyword>
<keyword id="KW-0904">Protein phosphatase</keyword>
<keyword id="KW-1185">Reference proteome</keyword>
<evidence type="ECO:0000305" key="1"/>
<comment type="similarity">
    <text evidence="1">Belongs to the SixA phosphatase family.</text>
</comment>
<organism>
    <name type="scientific">Haemophilus influenzae (strain ATCC 51907 / DSM 11121 / KW20 / Rd)</name>
    <dbReference type="NCBI Taxonomy" id="71421"/>
    <lineage>
        <taxon>Bacteria</taxon>
        <taxon>Pseudomonadati</taxon>
        <taxon>Pseudomonadota</taxon>
        <taxon>Gammaproteobacteria</taxon>
        <taxon>Pasteurellales</taxon>
        <taxon>Pasteurellaceae</taxon>
        <taxon>Haemophilus</taxon>
    </lineage>
</organism>
<reference key="1">
    <citation type="journal article" date="1995" name="Science">
        <title>Whole-genome random sequencing and assembly of Haemophilus influenzae Rd.</title>
        <authorList>
            <person name="Fleischmann R.D."/>
            <person name="Adams M.D."/>
            <person name="White O."/>
            <person name="Clayton R.A."/>
            <person name="Kirkness E.F."/>
            <person name="Kerlavage A.R."/>
            <person name="Bult C.J."/>
            <person name="Tomb J.-F."/>
            <person name="Dougherty B.A."/>
            <person name="Merrick J.M."/>
            <person name="McKenney K."/>
            <person name="Sutton G.G."/>
            <person name="FitzHugh W."/>
            <person name="Fields C.A."/>
            <person name="Gocayne J.D."/>
            <person name="Scott J.D."/>
            <person name="Shirley R."/>
            <person name="Liu L.-I."/>
            <person name="Glodek A."/>
            <person name="Kelley J.M."/>
            <person name="Weidman J.F."/>
            <person name="Phillips C.A."/>
            <person name="Spriggs T."/>
            <person name="Hedblom E."/>
            <person name="Cotton M.D."/>
            <person name="Utterback T.R."/>
            <person name="Hanna M.C."/>
            <person name="Nguyen D.T."/>
            <person name="Saudek D.M."/>
            <person name="Brandon R.C."/>
            <person name="Fine L.D."/>
            <person name="Fritchman J.L."/>
            <person name="Fuhrmann J.L."/>
            <person name="Geoghagen N.S.M."/>
            <person name="Gnehm C.L."/>
            <person name="McDonald L.A."/>
            <person name="Small K.V."/>
            <person name="Fraser C.M."/>
            <person name="Smith H.O."/>
            <person name="Venter J.C."/>
        </authorList>
    </citation>
    <scope>NUCLEOTIDE SEQUENCE [LARGE SCALE GENOMIC DNA]</scope>
    <source>
        <strain>ATCC 51907 / DSM 11121 / KW20 / Rd</strain>
    </source>
</reference>
<accession>P44164</accession>
<dbReference type="EC" id="3.1.3.-"/>
<dbReference type="EMBL" id="L42023">
    <property type="protein sequence ID" value="AAC22985.1"/>
    <property type="molecule type" value="Genomic_DNA"/>
</dbReference>
<dbReference type="EMBL" id="L42023">
    <property type="protein sequence ID" value="AAC23109.1"/>
    <property type="molecule type" value="Genomic_DNA"/>
</dbReference>
<dbReference type="PIR" id="B64026">
    <property type="entry name" value="B64026"/>
</dbReference>
<dbReference type="RefSeq" id="NP_439489.1">
    <property type="nucleotide sequence ID" value="NC_000907.1"/>
</dbReference>
<dbReference type="RefSeq" id="NP_439613.1">
    <property type="nucleotide sequence ID" value="NC_000907.1"/>
</dbReference>
<dbReference type="SMR" id="P44164"/>
<dbReference type="STRING" id="71421.HI_1338"/>
<dbReference type="EnsemblBacteria" id="AAC22985">
    <property type="protein sequence ID" value="AAC22985"/>
    <property type="gene ID" value="HI_1338"/>
</dbReference>
<dbReference type="EnsemblBacteria" id="AAC23109">
    <property type="protein sequence ID" value="AAC23109"/>
    <property type="gene ID" value="HI_1462.2"/>
</dbReference>
<dbReference type="KEGG" id="hin:HI_1338"/>
<dbReference type="KEGG" id="hin:HI_1462.2"/>
<dbReference type="PATRIC" id="fig|71421.8.peg.1390"/>
<dbReference type="eggNOG" id="COG2062">
    <property type="taxonomic scope" value="Bacteria"/>
</dbReference>
<dbReference type="HOGENOM" id="CLU_084603_1_1_6"/>
<dbReference type="OrthoDB" id="92610at2"/>
<dbReference type="PhylomeDB" id="P44164"/>
<dbReference type="Proteomes" id="UP000000579">
    <property type="component" value="Chromosome"/>
</dbReference>
<dbReference type="GO" id="GO:0005737">
    <property type="term" value="C:cytoplasm"/>
    <property type="evidence" value="ECO:0007669"/>
    <property type="project" value="InterPro"/>
</dbReference>
<dbReference type="GO" id="GO:0101006">
    <property type="term" value="F:protein histidine phosphatase activity"/>
    <property type="evidence" value="ECO:0007669"/>
    <property type="project" value="InterPro"/>
</dbReference>
<dbReference type="GO" id="GO:0036211">
    <property type="term" value="P:protein modification process"/>
    <property type="evidence" value="ECO:0007669"/>
    <property type="project" value="InterPro"/>
</dbReference>
<dbReference type="CDD" id="cd07067">
    <property type="entry name" value="HP_PGM_like"/>
    <property type="match status" value="1"/>
</dbReference>
<dbReference type="Gene3D" id="3.40.50.1240">
    <property type="entry name" value="Phosphoglycerate mutase-like"/>
    <property type="match status" value="1"/>
</dbReference>
<dbReference type="InterPro" id="IPR013078">
    <property type="entry name" value="His_Pase_superF_clade-1"/>
</dbReference>
<dbReference type="InterPro" id="IPR029033">
    <property type="entry name" value="His_PPase_superfam"/>
</dbReference>
<dbReference type="InterPro" id="IPR051021">
    <property type="entry name" value="Mito_Ser/Thr_phosphatase"/>
</dbReference>
<dbReference type="InterPro" id="IPR004449">
    <property type="entry name" value="SixA"/>
</dbReference>
<dbReference type="NCBIfam" id="TIGR00249">
    <property type="entry name" value="sixA"/>
    <property type="match status" value="1"/>
</dbReference>
<dbReference type="PANTHER" id="PTHR20935">
    <property type="entry name" value="PHOSPHOGLYCERATE MUTASE-RELATED"/>
    <property type="match status" value="1"/>
</dbReference>
<dbReference type="Pfam" id="PF00300">
    <property type="entry name" value="His_Phos_1"/>
    <property type="match status" value="1"/>
</dbReference>
<dbReference type="SUPFAM" id="SSF53254">
    <property type="entry name" value="Phosphoglycerate mutase-like"/>
    <property type="match status" value="1"/>
</dbReference>
<sequence>MNIFIMRHGEAEVMANSDKARHLTVYGSKQAFLQGQWLKQHLSTLVINSLDRILVSPYVRAQETFHQVNQAFDLELENKFEIWEGITPYGHAHSVIDYLEVLKDEGVKSVLIVSHLPLVGEIVAELYGKRNPISFYPATIAQLLWDGNKSEILMHQASPVIYLK</sequence>
<proteinExistence type="inferred from homology"/>
<protein>
    <recommendedName>
        <fullName>Phosphohistidine phosphatase SixA homolog</fullName>
        <ecNumber>3.1.3.-</ecNumber>
    </recommendedName>
</protein>
<name>SIXA_HAEIN</name>
<feature type="chain" id="PRO_0000214569" description="Phosphohistidine phosphatase SixA homolog">
    <location>
        <begin position="1"/>
        <end position="164"/>
    </location>
</feature>
<gene>
    <name type="primary">sixA-A</name>
    <name type="ordered locus">HI_1338</name>
</gene>
<gene>
    <name type="primary">sixA-B</name>
    <name type="ordered locus">HI_1462.2</name>
</gene>